<dbReference type="EC" id="5.4.2.11" evidence="1"/>
<dbReference type="EMBL" id="BA000036">
    <property type="protein sequence ID" value="BAB97795.1"/>
    <property type="molecule type" value="Genomic_DNA"/>
</dbReference>
<dbReference type="EMBL" id="BX927149">
    <property type="protein sequence ID" value="CAF19118.1"/>
    <property type="molecule type" value="Genomic_DNA"/>
</dbReference>
<dbReference type="RefSeq" id="NP_599649.1">
    <property type="nucleotide sequence ID" value="NC_003450.3"/>
</dbReference>
<dbReference type="RefSeq" id="WP_003855496.1">
    <property type="nucleotide sequence ID" value="NC_006958.1"/>
</dbReference>
<dbReference type="SMR" id="Q8NTA5"/>
<dbReference type="STRING" id="196627.cg0482"/>
<dbReference type="KEGG" id="cgb:cg0482"/>
<dbReference type="KEGG" id="cgl:Cgl0402"/>
<dbReference type="PATRIC" id="fig|196627.13.peg.402"/>
<dbReference type="eggNOG" id="COG0588">
    <property type="taxonomic scope" value="Bacteria"/>
</dbReference>
<dbReference type="HOGENOM" id="CLU_033323_1_1_11"/>
<dbReference type="OrthoDB" id="9781415at2"/>
<dbReference type="BioCyc" id="CORYNE:G18NG-9959-MONOMER"/>
<dbReference type="UniPathway" id="UPA00109">
    <property type="reaction ID" value="UER00186"/>
</dbReference>
<dbReference type="Proteomes" id="UP000000582">
    <property type="component" value="Chromosome"/>
</dbReference>
<dbReference type="Proteomes" id="UP000001009">
    <property type="component" value="Chromosome"/>
</dbReference>
<dbReference type="GO" id="GO:0004619">
    <property type="term" value="F:phosphoglycerate mutase activity"/>
    <property type="evidence" value="ECO:0007669"/>
    <property type="project" value="UniProtKB-EC"/>
</dbReference>
<dbReference type="GO" id="GO:0006094">
    <property type="term" value="P:gluconeogenesis"/>
    <property type="evidence" value="ECO:0007669"/>
    <property type="project" value="UniProtKB-UniRule"/>
</dbReference>
<dbReference type="GO" id="GO:0006096">
    <property type="term" value="P:glycolytic process"/>
    <property type="evidence" value="ECO:0007669"/>
    <property type="project" value="UniProtKB-UniRule"/>
</dbReference>
<dbReference type="CDD" id="cd07067">
    <property type="entry name" value="HP_PGM_like"/>
    <property type="match status" value="1"/>
</dbReference>
<dbReference type="FunFam" id="3.40.50.1240:FF:000003">
    <property type="entry name" value="2,3-bisphosphoglycerate-dependent phosphoglycerate mutase"/>
    <property type="match status" value="1"/>
</dbReference>
<dbReference type="Gene3D" id="3.40.50.1240">
    <property type="entry name" value="Phosphoglycerate mutase-like"/>
    <property type="match status" value="1"/>
</dbReference>
<dbReference type="HAMAP" id="MF_01039">
    <property type="entry name" value="PGAM_GpmA"/>
    <property type="match status" value="1"/>
</dbReference>
<dbReference type="InterPro" id="IPR013078">
    <property type="entry name" value="His_Pase_superF_clade-1"/>
</dbReference>
<dbReference type="InterPro" id="IPR029033">
    <property type="entry name" value="His_PPase_superfam"/>
</dbReference>
<dbReference type="InterPro" id="IPR001345">
    <property type="entry name" value="PG/BPGM_mutase_AS"/>
</dbReference>
<dbReference type="InterPro" id="IPR005952">
    <property type="entry name" value="Phosphogly_mut1"/>
</dbReference>
<dbReference type="NCBIfam" id="TIGR01258">
    <property type="entry name" value="pgm_1"/>
    <property type="match status" value="1"/>
</dbReference>
<dbReference type="NCBIfam" id="NF010713">
    <property type="entry name" value="PRK14115.1"/>
    <property type="match status" value="1"/>
</dbReference>
<dbReference type="NCBIfam" id="NF010718">
    <property type="entry name" value="PRK14120.1"/>
    <property type="match status" value="1"/>
</dbReference>
<dbReference type="PANTHER" id="PTHR11931">
    <property type="entry name" value="PHOSPHOGLYCERATE MUTASE"/>
    <property type="match status" value="1"/>
</dbReference>
<dbReference type="Pfam" id="PF00300">
    <property type="entry name" value="His_Phos_1"/>
    <property type="match status" value="2"/>
</dbReference>
<dbReference type="PIRSF" id="PIRSF000709">
    <property type="entry name" value="6PFK_2-Ptase"/>
    <property type="match status" value="1"/>
</dbReference>
<dbReference type="SMART" id="SM00855">
    <property type="entry name" value="PGAM"/>
    <property type="match status" value="1"/>
</dbReference>
<dbReference type="SUPFAM" id="SSF53254">
    <property type="entry name" value="Phosphoglycerate mutase-like"/>
    <property type="match status" value="1"/>
</dbReference>
<dbReference type="PROSITE" id="PS00175">
    <property type="entry name" value="PG_MUTASE"/>
    <property type="match status" value="1"/>
</dbReference>
<evidence type="ECO:0000255" key="1">
    <source>
        <dbReference type="HAMAP-Rule" id="MF_01039"/>
    </source>
</evidence>
<reference key="1">
    <citation type="journal article" date="2003" name="Appl. Microbiol. Biotechnol.">
        <title>The Corynebacterium glutamicum genome: features and impacts on biotechnological processes.</title>
        <authorList>
            <person name="Ikeda M."/>
            <person name="Nakagawa S."/>
        </authorList>
    </citation>
    <scope>NUCLEOTIDE SEQUENCE [LARGE SCALE GENOMIC DNA]</scope>
    <source>
        <strain>ATCC 13032 / DSM 20300 / JCM 1318 / BCRC 11384 / CCUG 27702 / LMG 3730 / NBRC 12168 / NCIMB 10025 / NRRL B-2784 / 534</strain>
    </source>
</reference>
<reference key="2">
    <citation type="journal article" date="2003" name="J. Biotechnol.">
        <title>The complete Corynebacterium glutamicum ATCC 13032 genome sequence and its impact on the production of L-aspartate-derived amino acids and vitamins.</title>
        <authorList>
            <person name="Kalinowski J."/>
            <person name="Bathe B."/>
            <person name="Bartels D."/>
            <person name="Bischoff N."/>
            <person name="Bott M."/>
            <person name="Burkovski A."/>
            <person name="Dusch N."/>
            <person name="Eggeling L."/>
            <person name="Eikmanns B.J."/>
            <person name="Gaigalat L."/>
            <person name="Goesmann A."/>
            <person name="Hartmann M."/>
            <person name="Huthmacher K."/>
            <person name="Kraemer R."/>
            <person name="Linke B."/>
            <person name="McHardy A.C."/>
            <person name="Meyer F."/>
            <person name="Moeckel B."/>
            <person name="Pfefferle W."/>
            <person name="Puehler A."/>
            <person name="Rey D.A."/>
            <person name="Rueckert C."/>
            <person name="Rupp O."/>
            <person name="Sahm H."/>
            <person name="Wendisch V.F."/>
            <person name="Wiegraebe I."/>
            <person name="Tauch A."/>
        </authorList>
    </citation>
    <scope>NUCLEOTIDE SEQUENCE [LARGE SCALE GENOMIC DNA]</scope>
    <source>
        <strain>ATCC 13032 / DSM 20300 / JCM 1318 / BCRC 11384 / CCUG 27702 / LMG 3730 / NBRC 12168 / NCIMB 10025 / NRRL B-2784 / 534</strain>
    </source>
</reference>
<accession>Q8NTA5</accession>
<feature type="chain" id="PRO_0000179871" description="2,3-bisphosphoglycerate-dependent phosphoglycerate mutase">
    <location>
        <begin position="1"/>
        <end position="248"/>
    </location>
</feature>
<feature type="active site" description="Tele-phosphohistidine intermediate" evidence="1">
    <location>
        <position position="11"/>
    </location>
</feature>
<feature type="active site" description="Proton donor/acceptor" evidence="1">
    <location>
        <position position="89"/>
    </location>
</feature>
<feature type="binding site" evidence="1">
    <location>
        <begin position="10"/>
        <end position="17"/>
    </location>
    <ligand>
        <name>substrate</name>
    </ligand>
</feature>
<feature type="binding site" evidence="1">
    <location>
        <begin position="23"/>
        <end position="24"/>
    </location>
    <ligand>
        <name>substrate</name>
    </ligand>
</feature>
<feature type="binding site" evidence="1">
    <location>
        <position position="62"/>
    </location>
    <ligand>
        <name>substrate</name>
    </ligand>
</feature>
<feature type="binding site" evidence="1">
    <location>
        <begin position="89"/>
        <end position="92"/>
    </location>
    <ligand>
        <name>substrate</name>
    </ligand>
</feature>
<feature type="binding site" evidence="1">
    <location>
        <position position="100"/>
    </location>
    <ligand>
        <name>substrate</name>
    </ligand>
</feature>
<feature type="binding site" evidence="1">
    <location>
        <begin position="116"/>
        <end position="117"/>
    </location>
    <ligand>
        <name>substrate</name>
    </ligand>
</feature>
<feature type="binding site" evidence="1">
    <location>
        <begin position="183"/>
        <end position="184"/>
    </location>
    <ligand>
        <name>substrate</name>
    </ligand>
</feature>
<feature type="site" description="Transition state stabilizer" evidence="1">
    <location>
        <position position="182"/>
    </location>
</feature>
<proteinExistence type="inferred from homology"/>
<comment type="function">
    <text evidence="1">Catalyzes the interconversion of 2-phosphoglycerate and 3-phosphoglycerate.</text>
</comment>
<comment type="catalytic activity">
    <reaction evidence="1">
        <text>(2R)-2-phosphoglycerate = (2R)-3-phosphoglycerate</text>
        <dbReference type="Rhea" id="RHEA:15901"/>
        <dbReference type="ChEBI" id="CHEBI:58272"/>
        <dbReference type="ChEBI" id="CHEBI:58289"/>
        <dbReference type="EC" id="5.4.2.11"/>
    </reaction>
</comment>
<comment type="pathway">
    <text evidence="1">Carbohydrate degradation; glycolysis; pyruvate from D-glyceraldehyde 3-phosphate: step 3/5.</text>
</comment>
<comment type="similarity">
    <text evidence="1">Belongs to the phosphoglycerate mutase family. BPG-dependent PGAM subfamily.</text>
</comment>
<organism>
    <name type="scientific">Corynebacterium glutamicum (strain ATCC 13032 / DSM 20300 / JCM 1318 / BCRC 11384 / CCUG 27702 / LMG 3730 / NBRC 12168 / NCIMB 10025 / NRRL B-2784 / 534)</name>
    <dbReference type="NCBI Taxonomy" id="196627"/>
    <lineage>
        <taxon>Bacteria</taxon>
        <taxon>Bacillati</taxon>
        <taxon>Actinomycetota</taxon>
        <taxon>Actinomycetes</taxon>
        <taxon>Mycobacteriales</taxon>
        <taxon>Corynebacteriaceae</taxon>
        <taxon>Corynebacterium</taxon>
    </lineage>
</organism>
<name>GPMA_CORGL</name>
<gene>
    <name evidence="1" type="primary">gpmA</name>
    <name type="ordered locus">Cgl0402</name>
    <name type="ordered locus">cg0482</name>
</gene>
<keyword id="KW-0312">Gluconeogenesis</keyword>
<keyword id="KW-0324">Glycolysis</keyword>
<keyword id="KW-0413">Isomerase</keyword>
<keyword id="KW-1185">Reference proteome</keyword>
<sequence>MTNGKLILLRHGQSEWNASNQFTGWVDVNLTEQGEAEAKRGGELLVEAGVLPGVVYTSLLRRAIRTANIALNAADRHWIPVIRDWRLNERHYGALQGLDKAATKEKYGDDQFMEWRRSYDTPPPELADDAEYSQANDPRYADLDVVPRTECLKDVVVRFVPYFEEEILPRAKKGETVLIAAHGNSLRALVKHLDGISDADIAELNIPTGIPLVYEIAEDGSVVNPGGTYLDPEAAAAGAAAVANQGNK</sequence>
<protein>
    <recommendedName>
        <fullName evidence="1">2,3-bisphosphoglycerate-dependent phosphoglycerate mutase</fullName>
        <shortName evidence="1">BPG-dependent PGAM</shortName>
        <shortName evidence="1">PGAM</shortName>
        <shortName evidence="1">Phosphoglyceromutase</shortName>
        <shortName evidence="1">dPGM</shortName>
        <ecNumber evidence="1">5.4.2.11</ecNumber>
    </recommendedName>
</protein>